<accession>Q9LVF0</accession>
<accession>Q8RX23</accession>
<sequence length="496" mass="55799">MELESSPPLPPHVMLVSFPGQGHVNPLLRLGKLLASKGLLITFVTTESWGKKMRISNKIQDRVLKPVGKGYLRYDFFDDGLPEDDEASRTNLTILRPHLELVGKREIKNLVKRYKEVTKQPVTCLINNPFVSWVCDVAEDLQIPCAVLWVQSCACLAAYYYYHHNLVDFPTKTEPEIDVQISGMPLLKHDEIPSFIHPSSPHSALREVIIDQIKRLHKTFSIFIDTFNSLEKDIIDHMSTLSLPGVIRPLGPLYKMAKTVAYDVVKVNISEPTDPCMEWLDSQPVSSVVYISFGTVAYLKQEQIDEIAYGVLNADVTFLWVIRQQELGFNKEKHVLPEEVKGKGKIVEWCSQEKVLSHPSVACFVTHCGWNSTMEAVSSGVPTVCFPQWGDQVTDAVYMIDVWKTGVRLSRGEAEERLVPREEVAERLREVTKGEKAIELKKNALKWKEEAEAAVARGGSSDRNLEKFVEKLGAKPVGKVQNGSHNHVLAGSIKSF</sequence>
<comment type="function">
    <text evidence="3 4 5 6 7 8">Sinapate glucosyltransferase (SGT) required for the biosynthesis of the glucose ester sinapoylglucose and subsequently sinapoylmalate and sinapoylcholine. Is the major SGT activity in plant (PubMed:11042211, PubMed:11187886, PubMed:17217457, PubMed:21899608). Plays an important role in sinapoylation of anthocyanins. Sinapoylglucose produced by UGT84A2 is a significant source of sinapoyl moieties for anthocyanins (PubMed:21899608). Indole-3-butyric acid (IBA)-specific glucosyltransferase that catalyzes the glucosylation of the auxin IBA, but not indole-3-acetic acid (IAA). May be involved in flowering regulation through IBA-mediated transcriptional repression of the auxin-response factors ARF6 and ARF8 and downstream flowering pathway genes (PubMed:29027578). Can glucosylate the phytotoxic xenobiotic compound 2,4,5-trichlorophenol (TCP) (PubMed:12721858).</text>
</comment>
<comment type="catalytic activity">
    <reaction evidence="4">
        <text>(E)-sinapate + UDP-alpha-D-glucose = 1-O-(trans-sinapoyl)-beta-D-glucose + UDP</text>
        <dbReference type="Rhea" id="RHEA:13305"/>
        <dbReference type="ChEBI" id="CHEBI:16546"/>
        <dbReference type="ChEBI" id="CHEBI:30023"/>
        <dbReference type="ChEBI" id="CHEBI:58223"/>
        <dbReference type="ChEBI" id="CHEBI:58885"/>
        <dbReference type="EC" id="2.4.1.120"/>
    </reaction>
</comment>
<comment type="biophysicochemical properties">
    <kinetics>
        <KM evidence="3">250 uM for sinapate</KM>
    </kinetics>
</comment>
<comment type="tissue specificity">
    <text evidence="6">Expressed in roots, cotyledons, leaf veins and trichomes.</text>
</comment>
<comment type="induction">
    <text evidence="8">Induced by the auxin indole-3-butyric acid (IBA).</text>
</comment>
<comment type="disruption phenotype">
    <text evidence="6">No visible phenotype under normal growth condition, but reduced epidermal fluorescence due to reduced content of sinapoylmalate and hyper-fluorescence of trichomes due to accumulation of sinapic acid-derived polyketide.</text>
</comment>
<comment type="miscellaneous">
    <text evidence="8">Ectopic expression of UGT84A2 causes delay in flowering increase of indole-3-butyric acid (IBA) level, down-regulation of the auxin-response factors ARF6 and ARF8, and down-regulation of the flowering-related genes FT, SOC1, AP1, and LFY.</text>
</comment>
<comment type="similarity">
    <text evidence="12">Belongs to the UDP-glycosyltransferase family.</text>
</comment>
<keyword id="KW-0216">Detoxification</keyword>
<keyword id="KW-0328">Glycosyltransferase</keyword>
<keyword id="KW-1185">Reference proteome</keyword>
<keyword id="KW-0808">Transferase</keyword>
<gene>
    <name evidence="9" type="primary">UGT84A2</name>
    <name evidence="11" type="synonym">BRT1</name>
    <name type="synonym">SGT</name>
    <name evidence="10" type="synonym">SGT1</name>
    <name evidence="13" type="ordered locus">At3g21560</name>
    <name evidence="14" type="ORF">MIL23.13</name>
</gene>
<dbReference type="EC" id="2.4.1.120" evidence="4"/>
<dbReference type="EMBL" id="AB019232">
    <property type="protein sequence ID" value="BAB02351.1"/>
    <property type="molecule type" value="Genomic_DNA"/>
</dbReference>
<dbReference type="EMBL" id="CP002686">
    <property type="protein sequence ID" value="AEE76523.1"/>
    <property type="molecule type" value="Genomic_DNA"/>
</dbReference>
<dbReference type="EMBL" id="AY090952">
    <property type="protein sequence ID" value="AAM13998.1"/>
    <property type="molecule type" value="mRNA"/>
</dbReference>
<dbReference type="EMBL" id="AY150475">
    <property type="protein sequence ID" value="AAN13000.1"/>
    <property type="molecule type" value="mRNA"/>
</dbReference>
<dbReference type="RefSeq" id="NP_188793.1">
    <property type="nucleotide sequence ID" value="NM_113051.3"/>
</dbReference>
<dbReference type="SMR" id="Q9LVF0"/>
<dbReference type="FunCoup" id="Q9LVF0">
    <property type="interactions" value="288"/>
</dbReference>
<dbReference type="STRING" id="3702.Q9LVF0"/>
<dbReference type="CAZy" id="GT1">
    <property type="family name" value="Glycosyltransferase Family 1"/>
</dbReference>
<dbReference type="PaxDb" id="3702-AT3G21560.1"/>
<dbReference type="ProteomicsDB" id="228733"/>
<dbReference type="EnsemblPlants" id="AT3G21560.1">
    <property type="protein sequence ID" value="AT3G21560.1"/>
    <property type="gene ID" value="AT3G21560"/>
</dbReference>
<dbReference type="GeneID" id="821710"/>
<dbReference type="Gramene" id="AT3G21560.1">
    <property type="protein sequence ID" value="AT3G21560.1"/>
    <property type="gene ID" value="AT3G21560"/>
</dbReference>
<dbReference type="KEGG" id="ath:AT3G21560"/>
<dbReference type="Araport" id="AT3G21560"/>
<dbReference type="TAIR" id="AT3G21560">
    <property type="gene designation" value="UGT84A2"/>
</dbReference>
<dbReference type="eggNOG" id="KOG1192">
    <property type="taxonomic scope" value="Eukaryota"/>
</dbReference>
<dbReference type="HOGENOM" id="CLU_001724_0_1_1"/>
<dbReference type="InParanoid" id="Q9LVF0"/>
<dbReference type="OMA" id="YKMAKTV"/>
<dbReference type="OrthoDB" id="5835829at2759"/>
<dbReference type="PhylomeDB" id="Q9LVF0"/>
<dbReference type="BRENDA" id="2.4.1.120">
    <property type="organism ID" value="399"/>
</dbReference>
<dbReference type="SABIO-RK" id="Q9LVF0"/>
<dbReference type="PRO" id="PR:Q9LVF0"/>
<dbReference type="Proteomes" id="UP000006548">
    <property type="component" value="Chromosome 3"/>
</dbReference>
<dbReference type="ExpressionAtlas" id="Q9LVF0">
    <property type="expression patterns" value="baseline and differential"/>
</dbReference>
<dbReference type="GO" id="GO:0005737">
    <property type="term" value="C:cytoplasm"/>
    <property type="evidence" value="ECO:0000314"/>
    <property type="project" value="TAIR"/>
</dbReference>
<dbReference type="GO" id="GO:0050284">
    <property type="term" value="F:sinapate 1-glucosyltransferase activity"/>
    <property type="evidence" value="ECO:0000314"/>
    <property type="project" value="TAIR"/>
</dbReference>
<dbReference type="GO" id="GO:0009718">
    <property type="term" value="P:anthocyanin-containing compound biosynthetic process"/>
    <property type="evidence" value="ECO:0000315"/>
    <property type="project" value="TAIR"/>
</dbReference>
<dbReference type="GO" id="GO:0009801">
    <property type="term" value="P:cinnamic acid ester metabolic process"/>
    <property type="evidence" value="ECO:0000315"/>
    <property type="project" value="TAIR"/>
</dbReference>
<dbReference type="GO" id="GO:0009636">
    <property type="term" value="P:response to toxic substance"/>
    <property type="evidence" value="ECO:0007669"/>
    <property type="project" value="UniProtKB-KW"/>
</dbReference>
<dbReference type="CDD" id="cd03784">
    <property type="entry name" value="GT1_Gtf-like"/>
    <property type="match status" value="1"/>
</dbReference>
<dbReference type="FunFam" id="3.40.50.2000:FF:000019">
    <property type="entry name" value="Glycosyltransferase"/>
    <property type="match status" value="1"/>
</dbReference>
<dbReference type="FunFam" id="3.40.50.2000:FF:000101">
    <property type="entry name" value="Glycosyltransferase"/>
    <property type="match status" value="1"/>
</dbReference>
<dbReference type="Gene3D" id="3.40.50.2000">
    <property type="entry name" value="Glycogen Phosphorylase B"/>
    <property type="match status" value="2"/>
</dbReference>
<dbReference type="InterPro" id="IPR002213">
    <property type="entry name" value="UDP_glucos_trans"/>
</dbReference>
<dbReference type="InterPro" id="IPR035595">
    <property type="entry name" value="UDP_glycos_trans_CS"/>
</dbReference>
<dbReference type="PANTHER" id="PTHR11926">
    <property type="entry name" value="GLUCOSYL/GLUCURONOSYL TRANSFERASES"/>
    <property type="match status" value="1"/>
</dbReference>
<dbReference type="PANTHER" id="PTHR11926:SF1521">
    <property type="entry name" value="UDP-GLYCOSYLTRANSFERASE 84A2"/>
    <property type="match status" value="1"/>
</dbReference>
<dbReference type="Pfam" id="PF00201">
    <property type="entry name" value="UDPGT"/>
    <property type="match status" value="1"/>
</dbReference>
<dbReference type="SUPFAM" id="SSF53756">
    <property type="entry name" value="UDP-Glycosyltransferase/glycogen phosphorylase"/>
    <property type="match status" value="1"/>
</dbReference>
<dbReference type="PROSITE" id="PS00375">
    <property type="entry name" value="UDPGT"/>
    <property type="match status" value="1"/>
</dbReference>
<organism>
    <name type="scientific">Arabidopsis thaliana</name>
    <name type="common">Mouse-ear cress</name>
    <dbReference type="NCBI Taxonomy" id="3702"/>
    <lineage>
        <taxon>Eukaryota</taxon>
        <taxon>Viridiplantae</taxon>
        <taxon>Streptophyta</taxon>
        <taxon>Embryophyta</taxon>
        <taxon>Tracheophyta</taxon>
        <taxon>Spermatophyta</taxon>
        <taxon>Magnoliopsida</taxon>
        <taxon>eudicotyledons</taxon>
        <taxon>Gunneridae</taxon>
        <taxon>Pentapetalae</taxon>
        <taxon>rosids</taxon>
        <taxon>malvids</taxon>
        <taxon>Brassicales</taxon>
        <taxon>Brassicaceae</taxon>
        <taxon>Camelineae</taxon>
        <taxon>Arabidopsis</taxon>
    </lineage>
</organism>
<name>U84A2_ARATH</name>
<reference key="1">
    <citation type="journal article" date="2000" name="DNA Res.">
        <title>Structural analysis of Arabidopsis thaliana chromosome 3. I. Sequence features of the regions of 4,504,864 bp covered by sixty P1 and TAC clones.</title>
        <authorList>
            <person name="Sato S."/>
            <person name="Nakamura Y."/>
            <person name="Kaneko T."/>
            <person name="Katoh T."/>
            <person name="Asamizu E."/>
            <person name="Tabata S."/>
        </authorList>
    </citation>
    <scope>NUCLEOTIDE SEQUENCE [LARGE SCALE GENOMIC DNA]</scope>
    <source>
        <strain>cv. Columbia</strain>
    </source>
</reference>
<reference key="2">
    <citation type="journal article" date="2017" name="Plant J.">
        <title>Araport11: a complete reannotation of the Arabidopsis thaliana reference genome.</title>
        <authorList>
            <person name="Cheng C.Y."/>
            <person name="Krishnakumar V."/>
            <person name="Chan A.P."/>
            <person name="Thibaud-Nissen F."/>
            <person name="Schobel S."/>
            <person name="Town C.D."/>
        </authorList>
    </citation>
    <scope>GENOME REANNOTATION</scope>
    <source>
        <strain>cv. Columbia</strain>
    </source>
</reference>
<reference key="3">
    <citation type="journal article" date="2003" name="Science">
        <title>Empirical analysis of transcriptional activity in the Arabidopsis genome.</title>
        <authorList>
            <person name="Yamada K."/>
            <person name="Lim J."/>
            <person name="Dale J.M."/>
            <person name="Chen H."/>
            <person name="Shinn P."/>
            <person name="Palm C.J."/>
            <person name="Southwick A.M."/>
            <person name="Wu H.C."/>
            <person name="Kim C.J."/>
            <person name="Nguyen M."/>
            <person name="Pham P.K."/>
            <person name="Cheuk R.F."/>
            <person name="Karlin-Newmann G."/>
            <person name="Liu S.X."/>
            <person name="Lam B."/>
            <person name="Sakano H."/>
            <person name="Wu T."/>
            <person name="Yu G."/>
            <person name="Miranda M."/>
            <person name="Quach H.L."/>
            <person name="Tripp M."/>
            <person name="Chang C.H."/>
            <person name="Lee J.M."/>
            <person name="Toriumi M.J."/>
            <person name="Chan M.M."/>
            <person name="Tang C.C."/>
            <person name="Onodera C.S."/>
            <person name="Deng J.M."/>
            <person name="Akiyama K."/>
            <person name="Ansari Y."/>
            <person name="Arakawa T."/>
            <person name="Banh J."/>
            <person name="Banno F."/>
            <person name="Bowser L."/>
            <person name="Brooks S.Y."/>
            <person name="Carninci P."/>
            <person name="Chao Q."/>
            <person name="Choy N."/>
            <person name="Enju A."/>
            <person name="Goldsmith A.D."/>
            <person name="Gurjal M."/>
            <person name="Hansen N.F."/>
            <person name="Hayashizaki Y."/>
            <person name="Johnson-Hopson C."/>
            <person name="Hsuan V.W."/>
            <person name="Iida K."/>
            <person name="Karnes M."/>
            <person name="Khan S."/>
            <person name="Koesema E."/>
            <person name="Ishida J."/>
            <person name="Jiang P.X."/>
            <person name="Jones T."/>
            <person name="Kawai J."/>
            <person name="Kamiya A."/>
            <person name="Meyers C."/>
            <person name="Nakajima M."/>
            <person name="Narusaka M."/>
            <person name="Seki M."/>
            <person name="Sakurai T."/>
            <person name="Satou M."/>
            <person name="Tamse R."/>
            <person name="Vaysberg M."/>
            <person name="Wallender E.K."/>
            <person name="Wong C."/>
            <person name="Yamamura Y."/>
            <person name="Yuan S."/>
            <person name="Shinozaki K."/>
            <person name="Davis R.W."/>
            <person name="Theologis A."/>
            <person name="Ecker J.R."/>
        </authorList>
    </citation>
    <scope>NUCLEOTIDE SEQUENCE [LARGE SCALE MRNA]</scope>
    <source>
        <strain>cv. Columbia</strain>
    </source>
</reference>
<reference key="4">
    <citation type="journal article" date="2000" name="FEBS Lett.">
        <title>Identification of four Arabidopsis genes encoding hydroxycinnamate glucosyltransferases.</title>
        <authorList>
            <person name="Milkowski C."/>
            <person name="Baumert A."/>
            <person name="Strack D."/>
        </authorList>
    </citation>
    <scope>FUNCTION</scope>
    <scope>CATALYTIC ACTIVITY</scope>
</reference>
<reference key="5">
    <citation type="journal article" date="2001" name="J. Biol. Chem.">
        <title>Phylogenetic analysis of the UDP-glycosyltransferase multigene family of Arabidopsis thaliana.</title>
        <authorList>
            <person name="Li Y."/>
            <person name="Baldauf S."/>
            <person name="Lim E.K."/>
            <person name="Bowles D.J."/>
        </authorList>
    </citation>
    <scope>GENE FAMILY</scope>
</reference>
<reference key="6">
    <citation type="journal article" date="2001" name="J. Biol. Chem.">
        <title>Identification of glucosyltransferase genes involved in sinapate metabolism and lignin synthesis in Arabidopsis.</title>
        <authorList>
            <person name="Lim E.K."/>
            <person name="Li Y."/>
            <person name="Parr A."/>
            <person name="Jackson R."/>
            <person name="Ashford D.A."/>
            <person name="Bowles D.J."/>
        </authorList>
    </citation>
    <scope>FUNCTION</scope>
    <scope>BIOPHYSICOCHEMICAL PROPERTIES</scope>
</reference>
<reference key="7">
    <citation type="journal article" date="2003" name="Planta">
        <title>Arabidopsis glucosyltransferases with activities toward both endogenous and xenobiotic substrates.</title>
        <authorList>
            <person name="Messner B."/>
            <person name="Thulke O."/>
            <person name="Schaeffner A.R."/>
        </authorList>
    </citation>
    <scope>FUNCTION</scope>
</reference>
<reference key="8">
    <citation type="journal article" date="2007" name="Plant J.">
        <title>The hyper-fluorescent trichome phenotype of the brt1 mutant of Arabidopsis is the result of a defect in a sinapic acid: UDPG glucosyltransferase.</title>
        <authorList>
            <person name="Sinlapadech T."/>
            <person name="Stout J."/>
            <person name="Ruegger M.O."/>
            <person name="Deak M."/>
            <person name="Chapple C."/>
        </authorList>
    </citation>
    <scope>FUNCTION</scope>
    <scope>TISSUE SPECIFICITY</scope>
    <scope>DISRUPTION PHENOTYPE</scope>
    <scope>MUTAGENESIS OF GLY-344; GLY-369; ALA-396 AND ARG-463</scope>
</reference>
<reference key="9">
    <citation type="journal article" date="2012" name="Plant J.">
        <title>Two glycosyltransferases involved in anthocyanin modification delineated by transcriptome independent component analysis in Arabidopsis thaliana.</title>
        <authorList>
            <person name="Yonekura-Sakakibara K."/>
            <person name="Fukushima A."/>
            <person name="Nakabayashi R."/>
            <person name="Hanada K."/>
            <person name="Matsuda F."/>
            <person name="Sugawara S."/>
            <person name="Inoue E."/>
            <person name="Kuromori T."/>
            <person name="Ito T."/>
            <person name="Shinozaki K."/>
            <person name="Wangwattana B."/>
            <person name="Yamazaki M."/>
            <person name="Saito K."/>
        </authorList>
    </citation>
    <scope>FUNCTION</scope>
</reference>
<reference key="10">
    <citation type="journal article" date="2017" name="Plant Cell Rep.">
        <title>Ectopic expression of UGT84A2 delayed flowering by indole-3-butyric acid-mediated transcriptional repression of ARF6 and ARF8 genes in Arabidopsis.</title>
        <authorList>
            <person name="Zhang G.Z."/>
            <person name="Jin S.H."/>
            <person name="Li P."/>
            <person name="Jiang X.Y."/>
            <person name="Li Y.J."/>
            <person name="Hou B.K."/>
        </authorList>
    </citation>
    <scope>FUNCTION</scope>
    <scope>INDUCTION BY AUXIN</scope>
</reference>
<protein>
    <recommendedName>
        <fullName evidence="9">UDP-glycosyltransferase 84A2</fullName>
    </recommendedName>
    <alternativeName>
        <fullName evidence="11">Protein BRIGHT TRICHOMES 1</fullName>
    </alternativeName>
    <alternativeName>
        <fullName evidence="10">Sinapate 1-glucosyltransferase 1</fullName>
        <shortName evidence="10">AtSGT1</shortName>
        <ecNumber evidence="4">2.4.1.120</ecNumber>
    </alternativeName>
</protein>
<evidence type="ECO:0000250" key="1">
    <source>
        <dbReference type="UniProtKB" id="A0A0A1HA03"/>
    </source>
</evidence>
<evidence type="ECO:0000250" key="2">
    <source>
        <dbReference type="UniProtKB" id="P51094"/>
    </source>
</evidence>
<evidence type="ECO:0000269" key="3">
    <source>
    </source>
</evidence>
<evidence type="ECO:0000269" key="4">
    <source>
    </source>
</evidence>
<evidence type="ECO:0000269" key="5">
    <source>
    </source>
</evidence>
<evidence type="ECO:0000269" key="6">
    <source>
    </source>
</evidence>
<evidence type="ECO:0000269" key="7">
    <source>
    </source>
</evidence>
<evidence type="ECO:0000269" key="8">
    <source>
    </source>
</evidence>
<evidence type="ECO:0000303" key="9">
    <source>
    </source>
</evidence>
<evidence type="ECO:0000303" key="10">
    <source>
    </source>
</evidence>
<evidence type="ECO:0000303" key="11">
    <source>
    </source>
</evidence>
<evidence type="ECO:0000305" key="12"/>
<evidence type="ECO:0000312" key="13">
    <source>
        <dbReference type="Araport" id="AT3G21560"/>
    </source>
</evidence>
<evidence type="ECO:0000312" key="14">
    <source>
        <dbReference type="EMBL" id="BAB02351.1"/>
    </source>
</evidence>
<proteinExistence type="evidence at protein level"/>
<feature type="chain" id="PRO_0000409121" description="UDP-glycosyltransferase 84A2">
    <location>
        <begin position="1"/>
        <end position="496"/>
    </location>
</feature>
<feature type="active site" description="Proton acceptor" evidence="1">
    <location>
        <position position="23"/>
    </location>
</feature>
<feature type="binding site" evidence="2">
    <location>
        <position position="23"/>
    </location>
    <ligand>
        <name>an anthocyanidin</name>
        <dbReference type="ChEBI" id="CHEBI:143576"/>
    </ligand>
</feature>
<feature type="binding site" evidence="1">
    <location>
        <position position="352"/>
    </location>
    <ligand>
        <name>UDP-alpha-D-glucose</name>
        <dbReference type="ChEBI" id="CHEBI:58885"/>
    </ligand>
</feature>
<feature type="binding site" evidence="1">
    <location>
        <position position="367"/>
    </location>
    <ligand>
        <name>UDP-alpha-D-glucose</name>
        <dbReference type="ChEBI" id="CHEBI:58885"/>
    </ligand>
</feature>
<feature type="binding site" evidence="1">
    <location>
        <position position="370"/>
    </location>
    <ligand>
        <name>UDP-alpha-D-glucose</name>
        <dbReference type="ChEBI" id="CHEBI:58885"/>
    </ligand>
</feature>
<feature type="binding site" evidence="1">
    <location>
        <position position="371"/>
    </location>
    <ligand>
        <name>UDP-alpha-D-glucose</name>
        <dbReference type="ChEBI" id="CHEBI:58885"/>
    </ligand>
</feature>
<feature type="binding site" evidence="1">
    <location>
        <position position="372"/>
    </location>
    <ligand>
        <name>UDP-alpha-D-glucose</name>
        <dbReference type="ChEBI" id="CHEBI:58885"/>
    </ligand>
</feature>
<feature type="binding site" evidence="1">
    <location>
        <position position="375"/>
    </location>
    <ligand>
        <name>UDP-alpha-D-glucose</name>
        <dbReference type="ChEBI" id="CHEBI:58885"/>
    </ligand>
</feature>
<feature type="binding site" evidence="2">
    <location>
        <position position="390"/>
    </location>
    <ligand>
        <name>an anthocyanidin</name>
        <dbReference type="ChEBI" id="CHEBI:143576"/>
    </ligand>
</feature>
<feature type="binding site" evidence="1">
    <location>
        <position position="391"/>
    </location>
    <ligand>
        <name>UDP-alpha-D-glucose</name>
        <dbReference type="ChEBI" id="CHEBI:58885"/>
    </ligand>
</feature>
<feature type="binding site" evidence="1">
    <location>
        <position position="392"/>
    </location>
    <ligand>
        <name>UDP-alpha-D-glucose</name>
        <dbReference type="ChEBI" id="CHEBI:58885"/>
    </ligand>
</feature>
<feature type="mutagenesis site" description="In brt1-6; reduces sinapoylmalate content in leaves." evidence="6">
    <original>G</original>
    <variation>R</variation>
    <location>
        <position position="344"/>
    </location>
</feature>
<feature type="mutagenesis site" description="In brt1-7; reduces sinapoylmalate content in leaves." evidence="6">
    <original>G</original>
    <variation>E</variation>
    <location>
        <position position="369"/>
    </location>
</feature>
<feature type="mutagenesis site" description="In brt1-5; reduces sinapoylmalate content in leaves." evidence="6">
    <original>A</original>
    <variation>T</variation>
    <location>
        <position position="396"/>
    </location>
</feature>
<feature type="mutagenesis site" description="In brt1-2; reduces sinapoylmalate content in leaves." evidence="6">
    <original>R</original>
    <variation>K</variation>
    <location>
        <position position="463"/>
    </location>
</feature>
<feature type="sequence conflict" description="In Ref. 3; AAM13998." evidence="12" ref="3">
    <original>D</original>
    <variation>G</variation>
    <location>
        <position position="168"/>
    </location>
</feature>